<dbReference type="EMBL" id="CP001598">
    <property type="protein sequence ID" value="ACQ50107.1"/>
    <property type="molecule type" value="Genomic_DNA"/>
</dbReference>
<dbReference type="RefSeq" id="WP_000766080.1">
    <property type="nucleotide sequence ID" value="NC_012659.1"/>
</dbReference>
<dbReference type="SMR" id="C3P9S4"/>
<dbReference type="GeneID" id="93010924"/>
<dbReference type="KEGG" id="bai:BAA_0145"/>
<dbReference type="HOGENOM" id="CLU_055188_4_2_9"/>
<dbReference type="GO" id="GO:0022625">
    <property type="term" value="C:cytosolic large ribosomal subunit"/>
    <property type="evidence" value="ECO:0007669"/>
    <property type="project" value="TreeGrafter"/>
</dbReference>
<dbReference type="GO" id="GO:0019843">
    <property type="term" value="F:rRNA binding"/>
    <property type="evidence" value="ECO:0007669"/>
    <property type="project" value="UniProtKB-UniRule"/>
</dbReference>
<dbReference type="GO" id="GO:0003735">
    <property type="term" value="F:structural constituent of ribosome"/>
    <property type="evidence" value="ECO:0007669"/>
    <property type="project" value="InterPro"/>
</dbReference>
<dbReference type="GO" id="GO:0006412">
    <property type="term" value="P:translation"/>
    <property type="evidence" value="ECO:0007669"/>
    <property type="project" value="UniProtKB-UniRule"/>
</dbReference>
<dbReference type="FunFam" id="3.100.10.10:FF:000004">
    <property type="entry name" value="50S ribosomal protein L15"/>
    <property type="match status" value="1"/>
</dbReference>
<dbReference type="Gene3D" id="3.100.10.10">
    <property type="match status" value="1"/>
</dbReference>
<dbReference type="HAMAP" id="MF_01341">
    <property type="entry name" value="Ribosomal_uL15"/>
    <property type="match status" value="1"/>
</dbReference>
<dbReference type="InterPro" id="IPR030878">
    <property type="entry name" value="Ribosomal_uL15"/>
</dbReference>
<dbReference type="InterPro" id="IPR021131">
    <property type="entry name" value="Ribosomal_uL15/eL18"/>
</dbReference>
<dbReference type="InterPro" id="IPR036227">
    <property type="entry name" value="Ribosomal_uL15/eL18_sf"/>
</dbReference>
<dbReference type="InterPro" id="IPR005749">
    <property type="entry name" value="Ribosomal_uL15_bac-type"/>
</dbReference>
<dbReference type="InterPro" id="IPR001196">
    <property type="entry name" value="Ribosomal_uL15_CS"/>
</dbReference>
<dbReference type="NCBIfam" id="TIGR01071">
    <property type="entry name" value="rplO_bact"/>
    <property type="match status" value="1"/>
</dbReference>
<dbReference type="PANTHER" id="PTHR12934">
    <property type="entry name" value="50S RIBOSOMAL PROTEIN L15"/>
    <property type="match status" value="1"/>
</dbReference>
<dbReference type="PANTHER" id="PTHR12934:SF11">
    <property type="entry name" value="LARGE RIBOSOMAL SUBUNIT PROTEIN UL15M"/>
    <property type="match status" value="1"/>
</dbReference>
<dbReference type="Pfam" id="PF00828">
    <property type="entry name" value="Ribosomal_L27A"/>
    <property type="match status" value="1"/>
</dbReference>
<dbReference type="SUPFAM" id="SSF52080">
    <property type="entry name" value="Ribosomal proteins L15p and L18e"/>
    <property type="match status" value="1"/>
</dbReference>
<dbReference type="PROSITE" id="PS00475">
    <property type="entry name" value="RIBOSOMAL_L15"/>
    <property type="match status" value="1"/>
</dbReference>
<organism>
    <name type="scientific">Bacillus anthracis (strain A0248)</name>
    <dbReference type="NCBI Taxonomy" id="592021"/>
    <lineage>
        <taxon>Bacteria</taxon>
        <taxon>Bacillati</taxon>
        <taxon>Bacillota</taxon>
        <taxon>Bacilli</taxon>
        <taxon>Bacillales</taxon>
        <taxon>Bacillaceae</taxon>
        <taxon>Bacillus</taxon>
        <taxon>Bacillus cereus group</taxon>
    </lineage>
</organism>
<comment type="function">
    <text evidence="1">Binds to the 23S rRNA.</text>
</comment>
<comment type="subunit">
    <text evidence="1">Part of the 50S ribosomal subunit.</text>
</comment>
<comment type="similarity">
    <text evidence="1">Belongs to the universal ribosomal protein uL15 family.</text>
</comment>
<reference key="1">
    <citation type="submission" date="2009-04" db="EMBL/GenBank/DDBJ databases">
        <title>Genome sequence of Bacillus anthracis A0248.</title>
        <authorList>
            <person name="Dodson R.J."/>
            <person name="Munk A.C."/>
            <person name="Bruce D."/>
            <person name="Detter C."/>
            <person name="Tapia R."/>
            <person name="Sutton G."/>
            <person name="Sims D."/>
            <person name="Brettin T."/>
        </authorList>
    </citation>
    <scope>NUCLEOTIDE SEQUENCE [LARGE SCALE GENOMIC DNA]</scope>
    <source>
        <strain>A0248</strain>
    </source>
</reference>
<proteinExistence type="inferred from homology"/>
<keyword id="KW-0687">Ribonucleoprotein</keyword>
<keyword id="KW-0689">Ribosomal protein</keyword>
<keyword id="KW-0694">RNA-binding</keyword>
<keyword id="KW-0699">rRNA-binding</keyword>
<sequence>MKLHELKPAEGSRKVRNRVGRGIGSGNGKTAGKGHKGQNARSGGGVRLGFEGGQTPLFRRLPKRGFTNINRKEFAIVNLSTLNRFEDGTEVTPELLLETGVISKLNDGVKILASGAVEKKLTVKAHKFSSSAKEAIEAAGGSVEVI</sequence>
<gene>
    <name evidence="1" type="primary">rplO</name>
    <name type="ordered locus">BAA_0145</name>
</gene>
<evidence type="ECO:0000255" key="1">
    <source>
        <dbReference type="HAMAP-Rule" id="MF_01341"/>
    </source>
</evidence>
<evidence type="ECO:0000256" key="2">
    <source>
        <dbReference type="SAM" id="MobiDB-lite"/>
    </source>
</evidence>
<evidence type="ECO:0000305" key="3"/>
<feature type="chain" id="PRO_1000166272" description="Large ribosomal subunit protein uL15">
    <location>
        <begin position="1"/>
        <end position="146"/>
    </location>
</feature>
<feature type="region of interest" description="Disordered" evidence="2">
    <location>
        <begin position="1"/>
        <end position="52"/>
    </location>
</feature>
<feature type="compositionally biased region" description="Basic and acidic residues" evidence="2">
    <location>
        <begin position="1"/>
        <end position="13"/>
    </location>
</feature>
<feature type="compositionally biased region" description="Gly residues" evidence="2">
    <location>
        <begin position="21"/>
        <end position="31"/>
    </location>
</feature>
<feature type="compositionally biased region" description="Gly residues" evidence="2">
    <location>
        <begin position="42"/>
        <end position="52"/>
    </location>
</feature>
<name>RL15_BACAA</name>
<accession>C3P9S4</accession>
<protein>
    <recommendedName>
        <fullName evidence="1">Large ribosomal subunit protein uL15</fullName>
    </recommendedName>
    <alternativeName>
        <fullName evidence="3">50S ribosomal protein L15</fullName>
    </alternativeName>
</protein>